<evidence type="ECO:0000255" key="1">
    <source>
        <dbReference type="HAMAP-Rule" id="MF_01659"/>
    </source>
</evidence>
<name>MEND_SHEB5</name>
<keyword id="KW-0460">Magnesium</keyword>
<keyword id="KW-0464">Manganese</keyword>
<keyword id="KW-0474">Menaquinone biosynthesis</keyword>
<keyword id="KW-0479">Metal-binding</keyword>
<keyword id="KW-1185">Reference proteome</keyword>
<keyword id="KW-0786">Thiamine pyrophosphate</keyword>
<keyword id="KW-0808">Transferase</keyword>
<protein>
    <recommendedName>
        <fullName evidence="1">2-succinyl-5-enolpyruvyl-6-hydroxy-3-cyclohexene-1-carboxylate synthase</fullName>
        <shortName evidence="1">SEPHCHC synthase</shortName>
        <ecNumber evidence="1">2.2.1.9</ecNumber>
    </recommendedName>
    <alternativeName>
        <fullName evidence="1">Menaquinone biosynthesis protein MenD</fullName>
    </alternativeName>
</protein>
<sequence length="573" mass="62914">MRTENTATLNLIWGALILEELARLGVQHVCMAPGSRSTPLTLAAAQQTKLQRHLHFDERGLGFMALGLAKASRAPVAIITTSGTAVANLYPAIVEAWLTHVPLIVLSGDRPPELLGCGANQAIVQPGIFANYATQVNLPTPDAHIAPQALLTTVDEAVANQTRPVHINCMYREPLYPSELSGVILDAESPYLKPLQTWLQLARPYTQYGKSKQLSSPSDDAIMRFVHGKGVIVVGTLTPEQDPQQLIALSQKIGWPLLTDAQSQLRQHPAAIGNIDQLLQHPKARNLLQEADRVLVFGGRLLSKRVIGYLAEQNWHSYWQVLPEQDRLDPSHNAKHIWHANAEQFAALNWYRSSSANWANTLITYNDELHNLFVRNIDQGEFGEAQVIRAIANTRPLEQQLFIGNSLPVRLYDMYAPVSCCTATTYTNRGASGIDGLLATACGIAAHEGKPTSLIIGDLSQLHDLNSLAIAKGLSSPLVIVILNNDGGNIFNLLPVPNEQVRSEYYRLSHGLEFGYAAAMFNLPYNQVDNLADFQDSYNEALDFQGASIIEVNVSQNQASDQIAALNLWVKQS</sequence>
<proteinExistence type="inferred from homology"/>
<organism>
    <name type="scientific">Shewanella baltica (strain OS155 / ATCC BAA-1091)</name>
    <dbReference type="NCBI Taxonomy" id="325240"/>
    <lineage>
        <taxon>Bacteria</taxon>
        <taxon>Pseudomonadati</taxon>
        <taxon>Pseudomonadota</taxon>
        <taxon>Gammaproteobacteria</taxon>
        <taxon>Alteromonadales</taxon>
        <taxon>Shewanellaceae</taxon>
        <taxon>Shewanella</taxon>
    </lineage>
</organism>
<feature type="chain" id="PRO_0000341828" description="2-succinyl-5-enolpyruvyl-6-hydroxy-3-cyclohexene-1-carboxylate synthase">
    <location>
        <begin position="1"/>
        <end position="573"/>
    </location>
</feature>
<dbReference type="EC" id="2.2.1.9" evidence="1"/>
<dbReference type="EMBL" id="CP000563">
    <property type="protein sequence ID" value="ABN59712.1"/>
    <property type="molecule type" value="Genomic_DNA"/>
</dbReference>
<dbReference type="RefSeq" id="WP_011845460.1">
    <property type="nucleotide sequence ID" value="NC_009052.1"/>
</dbReference>
<dbReference type="SMR" id="A3CYZ9"/>
<dbReference type="STRING" id="325240.Sbal_0178"/>
<dbReference type="KEGG" id="sbl:Sbal_0178"/>
<dbReference type="HOGENOM" id="CLU_006051_3_0_6"/>
<dbReference type="OrthoDB" id="9791859at2"/>
<dbReference type="UniPathway" id="UPA00079"/>
<dbReference type="UniPathway" id="UPA01057">
    <property type="reaction ID" value="UER00164"/>
</dbReference>
<dbReference type="Proteomes" id="UP000001557">
    <property type="component" value="Chromosome"/>
</dbReference>
<dbReference type="GO" id="GO:0070204">
    <property type="term" value="F:2-succinyl-5-enolpyruvyl-6-hydroxy-3-cyclohexene-1-carboxylic-acid synthase activity"/>
    <property type="evidence" value="ECO:0007669"/>
    <property type="project" value="UniProtKB-UniRule"/>
</dbReference>
<dbReference type="GO" id="GO:0000287">
    <property type="term" value="F:magnesium ion binding"/>
    <property type="evidence" value="ECO:0007669"/>
    <property type="project" value="UniProtKB-UniRule"/>
</dbReference>
<dbReference type="GO" id="GO:0030145">
    <property type="term" value="F:manganese ion binding"/>
    <property type="evidence" value="ECO:0007669"/>
    <property type="project" value="UniProtKB-UniRule"/>
</dbReference>
<dbReference type="GO" id="GO:0030976">
    <property type="term" value="F:thiamine pyrophosphate binding"/>
    <property type="evidence" value="ECO:0007669"/>
    <property type="project" value="UniProtKB-UniRule"/>
</dbReference>
<dbReference type="GO" id="GO:0009234">
    <property type="term" value="P:menaquinone biosynthetic process"/>
    <property type="evidence" value="ECO:0007669"/>
    <property type="project" value="UniProtKB-UniRule"/>
</dbReference>
<dbReference type="CDD" id="cd07037">
    <property type="entry name" value="TPP_PYR_MenD"/>
    <property type="match status" value="1"/>
</dbReference>
<dbReference type="CDD" id="cd02009">
    <property type="entry name" value="TPP_SHCHC_synthase"/>
    <property type="match status" value="1"/>
</dbReference>
<dbReference type="Gene3D" id="3.40.50.970">
    <property type="match status" value="2"/>
</dbReference>
<dbReference type="Gene3D" id="3.40.50.1220">
    <property type="entry name" value="TPP-binding domain"/>
    <property type="match status" value="1"/>
</dbReference>
<dbReference type="HAMAP" id="MF_01659">
    <property type="entry name" value="MenD"/>
    <property type="match status" value="1"/>
</dbReference>
<dbReference type="InterPro" id="IPR029035">
    <property type="entry name" value="DHS-like_NAD/FAD-binding_dom"/>
</dbReference>
<dbReference type="InterPro" id="IPR004433">
    <property type="entry name" value="MenaQ_synth_MenD"/>
</dbReference>
<dbReference type="InterPro" id="IPR032264">
    <property type="entry name" value="MenD_middle"/>
</dbReference>
<dbReference type="InterPro" id="IPR029061">
    <property type="entry name" value="THDP-binding"/>
</dbReference>
<dbReference type="InterPro" id="IPR012001">
    <property type="entry name" value="Thiamin_PyroP_enz_TPP-bd_dom"/>
</dbReference>
<dbReference type="InterPro" id="IPR011766">
    <property type="entry name" value="TPP_enzyme_TPP-bd"/>
</dbReference>
<dbReference type="NCBIfam" id="TIGR00173">
    <property type="entry name" value="menD"/>
    <property type="match status" value="1"/>
</dbReference>
<dbReference type="PANTHER" id="PTHR42916">
    <property type="entry name" value="2-SUCCINYL-5-ENOLPYRUVYL-6-HYDROXY-3-CYCLOHEXENE-1-CARBOXYLATE SYNTHASE"/>
    <property type="match status" value="1"/>
</dbReference>
<dbReference type="PANTHER" id="PTHR42916:SF1">
    <property type="entry name" value="PROTEIN PHYLLO, CHLOROPLASTIC"/>
    <property type="match status" value="1"/>
</dbReference>
<dbReference type="Pfam" id="PF02775">
    <property type="entry name" value="TPP_enzyme_C"/>
    <property type="match status" value="1"/>
</dbReference>
<dbReference type="Pfam" id="PF16582">
    <property type="entry name" value="TPP_enzyme_M_2"/>
    <property type="match status" value="1"/>
</dbReference>
<dbReference type="Pfam" id="PF02776">
    <property type="entry name" value="TPP_enzyme_N"/>
    <property type="match status" value="1"/>
</dbReference>
<dbReference type="PIRSF" id="PIRSF004983">
    <property type="entry name" value="MenD"/>
    <property type="match status" value="1"/>
</dbReference>
<dbReference type="SUPFAM" id="SSF52467">
    <property type="entry name" value="DHS-like NAD/FAD-binding domain"/>
    <property type="match status" value="1"/>
</dbReference>
<dbReference type="SUPFAM" id="SSF52518">
    <property type="entry name" value="Thiamin diphosphate-binding fold (THDP-binding)"/>
    <property type="match status" value="2"/>
</dbReference>
<reference key="1">
    <citation type="submission" date="2007-02" db="EMBL/GenBank/DDBJ databases">
        <title>Complete sequence of chromosome of Shewanella baltica OS155.</title>
        <authorList>
            <consortium name="US DOE Joint Genome Institute"/>
            <person name="Copeland A."/>
            <person name="Lucas S."/>
            <person name="Lapidus A."/>
            <person name="Barry K."/>
            <person name="Detter J.C."/>
            <person name="Glavina del Rio T."/>
            <person name="Hammon N."/>
            <person name="Israni S."/>
            <person name="Dalin E."/>
            <person name="Tice H."/>
            <person name="Pitluck S."/>
            <person name="Sims D.R."/>
            <person name="Brettin T."/>
            <person name="Bruce D."/>
            <person name="Han C."/>
            <person name="Tapia R."/>
            <person name="Brainard J."/>
            <person name="Schmutz J."/>
            <person name="Larimer F."/>
            <person name="Land M."/>
            <person name="Hauser L."/>
            <person name="Kyrpides N."/>
            <person name="Mikhailova N."/>
            <person name="Brettar I."/>
            <person name="Klappenbach J."/>
            <person name="Konstantinidis K."/>
            <person name="Rodrigues J."/>
            <person name="Tiedje J."/>
            <person name="Richardson P."/>
        </authorList>
    </citation>
    <scope>NUCLEOTIDE SEQUENCE [LARGE SCALE GENOMIC DNA]</scope>
    <source>
        <strain>OS155 / ATCC BAA-1091</strain>
    </source>
</reference>
<gene>
    <name evidence="1" type="primary">menD</name>
    <name type="ordered locus">Sbal_0178</name>
</gene>
<accession>A3CYZ9</accession>
<comment type="function">
    <text evidence="1">Catalyzes the thiamine diphosphate-dependent decarboxylation of 2-oxoglutarate and the subsequent addition of the resulting succinic semialdehyde-thiamine pyrophosphate anion to isochorismate to yield 2-succinyl-5-enolpyruvyl-6-hydroxy-3-cyclohexene-1-carboxylate (SEPHCHC).</text>
</comment>
<comment type="catalytic activity">
    <reaction evidence="1">
        <text>isochorismate + 2-oxoglutarate + H(+) = 5-enolpyruvoyl-6-hydroxy-2-succinyl-cyclohex-3-ene-1-carboxylate + CO2</text>
        <dbReference type="Rhea" id="RHEA:25593"/>
        <dbReference type="ChEBI" id="CHEBI:15378"/>
        <dbReference type="ChEBI" id="CHEBI:16526"/>
        <dbReference type="ChEBI" id="CHEBI:16810"/>
        <dbReference type="ChEBI" id="CHEBI:29780"/>
        <dbReference type="ChEBI" id="CHEBI:58818"/>
        <dbReference type="EC" id="2.2.1.9"/>
    </reaction>
</comment>
<comment type="cofactor">
    <cofactor evidence="1">
        <name>Mg(2+)</name>
        <dbReference type="ChEBI" id="CHEBI:18420"/>
    </cofactor>
    <cofactor evidence="1">
        <name>Mn(2+)</name>
        <dbReference type="ChEBI" id="CHEBI:29035"/>
    </cofactor>
</comment>
<comment type="cofactor">
    <cofactor evidence="1">
        <name>thiamine diphosphate</name>
        <dbReference type="ChEBI" id="CHEBI:58937"/>
    </cofactor>
    <text evidence="1">Binds 1 thiamine pyrophosphate per subunit.</text>
</comment>
<comment type="pathway">
    <text evidence="1">Quinol/quinone metabolism; 1,4-dihydroxy-2-naphthoate biosynthesis; 1,4-dihydroxy-2-naphthoate from chorismate: step 2/7.</text>
</comment>
<comment type="pathway">
    <text evidence="1">Quinol/quinone metabolism; menaquinone biosynthesis.</text>
</comment>
<comment type="subunit">
    <text evidence="1">Homodimer.</text>
</comment>
<comment type="similarity">
    <text evidence="1">Belongs to the TPP enzyme family. MenD subfamily.</text>
</comment>